<gene>
    <name evidence="1" type="primary">ulaG</name>
    <name type="ordered locus">E2348C_4515</name>
</gene>
<evidence type="ECO:0000255" key="1">
    <source>
        <dbReference type="HAMAP-Rule" id="MF_01266"/>
    </source>
</evidence>
<protein>
    <recommendedName>
        <fullName evidence="1">Probable L-ascorbate-6-phosphate lactonase UlaG</fullName>
        <ecNumber evidence="1">3.1.1.-</ecNumber>
    </recommendedName>
    <alternativeName>
        <fullName evidence="1">L-ascorbate utilization protein G</fullName>
    </alternativeName>
</protein>
<sequence length="354" mass="40061">MSKVKSITRESWILSTFPEWGSWLNEEIEQEQVAPGTFAMWWLGCTGIWLKSEGGANVCVDFWCGTGKQSHGNPFMKQGHQMQRMAGVKKLQPNLRTTPFVLDPFAIRQIDAVLATHDHNDHIDVNVAAAVMQNCADDVPFIGPKTCVDLWIGWGVPKERCIVVKPGDVVKVKDIEIHALDAFDRTALITLPADQKAAGVLPDGMDDRAVNYLFKTPGGTLYHSGDSHYSNYYAKHGNEHQIDVALGSYGENPRGITDKMTSADILRMGEALNAKVVIPFHHDIWSNFQADPQEIRVLWEMKKDRLKYGFKPFIWQVGGKFTWPLDKDNFEYHYPRGFDDCFTIEPDLPFKSFL</sequence>
<dbReference type="EC" id="3.1.1.-" evidence="1"/>
<dbReference type="EMBL" id="FM180568">
    <property type="protein sequence ID" value="CAS12063.1"/>
    <property type="molecule type" value="Genomic_DNA"/>
</dbReference>
<dbReference type="RefSeq" id="WP_001298012.1">
    <property type="nucleotide sequence ID" value="NC_011601.1"/>
</dbReference>
<dbReference type="SMR" id="B7UQK1"/>
<dbReference type="KEGG" id="ecg:E2348C_4515"/>
<dbReference type="HOGENOM" id="CLU_074775_0_0_6"/>
<dbReference type="UniPathway" id="UPA00263">
    <property type="reaction ID" value="UER00377"/>
</dbReference>
<dbReference type="Proteomes" id="UP000008205">
    <property type="component" value="Chromosome"/>
</dbReference>
<dbReference type="GO" id="GO:0005737">
    <property type="term" value="C:cytoplasm"/>
    <property type="evidence" value="ECO:0007669"/>
    <property type="project" value="UniProtKB-SubCell"/>
</dbReference>
<dbReference type="GO" id="GO:0035460">
    <property type="term" value="F:L-ascorbate 6-phosphate lactonase activity"/>
    <property type="evidence" value="ECO:0007669"/>
    <property type="project" value="InterPro"/>
</dbReference>
<dbReference type="GO" id="GO:0030145">
    <property type="term" value="F:manganese ion binding"/>
    <property type="evidence" value="ECO:0007669"/>
    <property type="project" value="InterPro"/>
</dbReference>
<dbReference type="GO" id="GO:0019854">
    <property type="term" value="P:L-ascorbic acid catabolic process"/>
    <property type="evidence" value="ECO:0007669"/>
    <property type="project" value="UniProtKB-UniRule"/>
</dbReference>
<dbReference type="CDD" id="cd16284">
    <property type="entry name" value="UlaG-like_MBL-fold"/>
    <property type="match status" value="1"/>
</dbReference>
<dbReference type="FunFam" id="3.60.15.10:FF:000004">
    <property type="entry name" value="Probable L-ascorbate-6-phosphate lactonase UlaG"/>
    <property type="match status" value="1"/>
</dbReference>
<dbReference type="Gene3D" id="3.60.15.10">
    <property type="entry name" value="Ribonuclease Z/Hydroxyacylglutathione hydrolase-like"/>
    <property type="match status" value="1"/>
</dbReference>
<dbReference type="HAMAP" id="MF_01266">
    <property type="entry name" value="UlaG"/>
    <property type="match status" value="1"/>
</dbReference>
<dbReference type="InterPro" id="IPR023951">
    <property type="entry name" value="L-ascorbate_6P_UlaG"/>
</dbReference>
<dbReference type="InterPro" id="IPR001279">
    <property type="entry name" value="Metallo-B-lactamas"/>
</dbReference>
<dbReference type="InterPro" id="IPR036866">
    <property type="entry name" value="RibonucZ/Hydroxyglut_hydro"/>
</dbReference>
<dbReference type="InterPro" id="IPR048021">
    <property type="entry name" value="UlaG-like_MBL-fold"/>
</dbReference>
<dbReference type="InterPro" id="IPR050114">
    <property type="entry name" value="UPF0173_UPF0282_UlaG_hydrolase"/>
</dbReference>
<dbReference type="NCBIfam" id="NF008688">
    <property type="entry name" value="PRK11709.1"/>
    <property type="match status" value="1"/>
</dbReference>
<dbReference type="PANTHER" id="PTHR43546:SF9">
    <property type="entry name" value="L-ASCORBATE-6-PHOSPHATE LACTONASE ULAG-RELATED"/>
    <property type="match status" value="1"/>
</dbReference>
<dbReference type="PANTHER" id="PTHR43546">
    <property type="entry name" value="UPF0173 METAL-DEPENDENT HYDROLASE MJ1163-RELATED"/>
    <property type="match status" value="1"/>
</dbReference>
<dbReference type="Pfam" id="PF12706">
    <property type="entry name" value="Lactamase_B_2"/>
    <property type="match status" value="1"/>
</dbReference>
<dbReference type="SUPFAM" id="SSF56281">
    <property type="entry name" value="Metallo-hydrolase/oxidoreductase"/>
    <property type="match status" value="1"/>
</dbReference>
<name>ULAG_ECO27</name>
<feature type="chain" id="PRO_1000165137" description="Probable L-ascorbate-6-phosphate lactonase UlaG">
    <location>
        <begin position="1"/>
        <end position="354"/>
    </location>
</feature>
<organism>
    <name type="scientific">Escherichia coli O127:H6 (strain E2348/69 / EPEC)</name>
    <dbReference type="NCBI Taxonomy" id="574521"/>
    <lineage>
        <taxon>Bacteria</taxon>
        <taxon>Pseudomonadati</taxon>
        <taxon>Pseudomonadota</taxon>
        <taxon>Gammaproteobacteria</taxon>
        <taxon>Enterobacterales</taxon>
        <taxon>Enterobacteriaceae</taxon>
        <taxon>Escherichia</taxon>
    </lineage>
</organism>
<keyword id="KW-0963">Cytoplasm</keyword>
<keyword id="KW-0378">Hydrolase</keyword>
<keyword id="KW-1185">Reference proteome</keyword>
<comment type="function">
    <text evidence="1">Probably catalyzes the hydrolysis of L-ascorbate-6-P into 3-keto-L-gulonate-6-P. Is essential for L-ascorbate utilization under anaerobic conditions.</text>
</comment>
<comment type="catalytic activity">
    <reaction evidence="1">
        <text>L-ascorbate 6-phosphate + H2O = 3-dehydro-L-gulonate 6-phosphate</text>
        <dbReference type="Rhea" id="RHEA:28803"/>
        <dbReference type="ChEBI" id="CHEBI:15377"/>
        <dbReference type="ChEBI" id="CHEBI:58774"/>
        <dbReference type="ChEBI" id="CHEBI:61698"/>
    </reaction>
</comment>
<comment type="cofactor">
    <cofactor evidence="1">
        <name>a divalent metal cation</name>
        <dbReference type="ChEBI" id="CHEBI:60240"/>
    </cofactor>
</comment>
<comment type="pathway">
    <text evidence="1">Cofactor degradation; L-ascorbate degradation; D-xylulose 5-phosphate from L-ascorbate: step 1/4.</text>
</comment>
<comment type="subcellular location">
    <subcellularLocation>
        <location evidence="1">Cytoplasm</location>
    </subcellularLocation>
</comment>
<comment type="induction">
    <text evidence="1">Induced by L-ascorbate. Repressed by UlaR.</text>
</comment>
<comment type="similarity">
    <text evidence="1">Belongs to the UlaG family.</text>
</comment>
<accession>B7UQK1</accession>
<reference key="1">
    <citation type="journal article" date="2009" name="J. Bacteriol.">
        <title>Complete genome sequence and comparative genome analysis of enteropathogenic Escherichia coli O127:H6 strain E2348/69.</title>
        <authorList>
            <person name="Iguchi A."/>
            <person name="Thomson N.R."/>
            <person name="Ogura Y."/>
            <person name="Saunders D."/>
            <person name="Ooka T."/>
            <person name="Henderson I.R."/>
            <person name="Harris D."/>
            <person name="Asadulghani M."/>
            <person name="Kurokawa K."/>
            <person name="Dean P."/>
            <person name="Kenny B."/>
            <person name="Quail M.A."/>
            <person name="Thurston S."/>
            <person name="Dougan G."/>
            <person name="Hayashi T."/>
            <person name="Parkhill J."/>
            <person name="Frankel G."/>
        </authorList>
    </citation>
    <scope>NUCLEOTIDE SEQUENCE [LARGE SCALE GENOMIC DNA]</scope>
    <source>
        <strain>E2348/69 / EPEC</strain>
    </source>
</reference>
<proteinExistence type="inferred from homology"/>